<evidence type="ECO:0000255" key="1">
    <source>
        <dbReference type="HAMAP-Rule" id="MF_01454"/>
    </source>
</evidence>
<evidence type="ECO:0000255" key="2">
    <source>
        <dbReference type="PROSITE-ProRule" id="PRU01231"/>
    </source>
</evidence>
<proteinExistence type="inferred from homology"/>
<dbReference type="EC" id="3.6.5.-" evidence="1"/>
<dbReference type="EMBL" id="CP000884">
    <property type="protein sequence ID" value="ABX38113.1"/>
    <property type="molecule type" value="Genomic_DNA"/>
</dbReference>
<dbReference type="SMR" id="A9BP68"/>
<dbReference type="STRING" id="398578.Daci_5484"/>
<dbReference type="GeneID" id="24115232"/>
<dbReference type="KEGG" id="dac:Daci_5484"/>
<dbReference type="eggNOG" id="COG0536">
    <property type="taxonomic scope" value="Bacteria"/>
</dbReference>
<dbReference type="HOGENOM" id="CLU_011747_2_0_4"/>
<dbReference type="Proteomes" id="UP000000784">
    <property type="component" value="Chromosome"/>
</dbReference>
<dbReference type="GO" id="GO:0005737">
    <property type="term" value="C:cytoplasm"/>
    <property type="evidence" value="ECO:0007669"/>
    <property type="project" value="UniProtKB-SubCell"/>
</dbReference>
<dbReference type="GO" id="GO:0005525">
    <property type="term" value="F:GTP binding"/>
    <property type="evidence" value="ECO:0007669"/>
    <property type="project" value="UniProtKB-UniRule"/>
</dbReference>
<dbReference type="GO" id="GO:0003924">
    <property type="term" value="F:GTPase activity"/>
    <property type="evidence" value="ECO:0007669"/>
    <property type="project" value="UniProtKB-UniRule"/>
</dbReference>
<dbReference type="GO" id="GO:0000287">
    <property type="term" value="F:magnesium ion binding"/>
    <property type="evidence" value="ECO:0007669"/>
    <property type="project" value="InterPro"/>
</dbReference>
<dbReference type="GO" id="GO:0042254">
    <property type="term" value="P:ribosome biogenesis"/>
    <property type="evidence" value="ECO:0007669"/>
    <property type="project" value="UniProtKB-UniRule"/>
</dbReference>
<dbReference type="CDD" id="cd01898">
    <property type="entry name" value="Obg"/>
    <property type="match status" value="1"/>
</dbReference>
<dbReference type="FunFam" id="2.70.210.12:FF:000001">
    <property type="entry name" value="GTPase Obg"/>
    <property type="match status" value="1"/>
</dbReference>
<dbReference type="Gene3D" id="2.70.210.12">
    <property type="entry name" value="GTP1/OBG domain"/>
    <property type="match status" value="1"/>
</dbReference>
<dbReference type="Gene3D" id="3.40.50.300">
    <property type="entry name" value="P-loop containing nucleotide triphosphate hydrolases"/>
    <property type="match status" value="1"/>
</dbReference>
<dbReference type="HAMAP" id="MF_01454">
    <property type="entry name" value="GTPase_Obg"/>
    <property type="match status" value="1"/>
</dbReference>
<dbReference type="InterPro" id="IPR031167">
    <property type="entry name" value="G_OBG"/>
</dbReference>
<dbReference type="InterPro" id="IPR006073">
    <property type="entry name" value="GTP-bd"/>
</dbReference>
<dbReference type="InterPro" id="IPR014100">
    <property type="entry name" value="GTP-bd_Obg/CgtA"/>
</dbReference>
<dbReference type="InterPro" id="IPR006074">
    <property type="entry name" value="GTP1-OBG_CS"/>
</dbReference>
<dbReference type="InterPro" id="IPR006169">
    <property type="entry name" value="GTP1_OBG_dom"/>
</dbReference>
<dbReference type="InterPro" id="IPR036726">
    <property type="entry name" value="GTP1_OBG_dom_sf"/>
</dbReference>
<dbReference type="InterPro" id="IPR045086">
    <property type="entry name" value="OBG_GTPase"/>
</dbReference>
<dbReference type="InterPro" id="IPR027417">
    <property type="entry name" value="P-loop_NTPase"/>
</dbReference>
<dbReference type="NCBIfam" id="TIGR02729">
    <property type="entry name" value="Obg_CgtA"/>
    <property type="match status" value="1"/>
</dbReference>
<dbReference type="NCBIfam" id="NF008954">
    <property type="entry name" value="PRK12296.1"/>
    <property type="match status" value="1"/>
</dbReference>
<dbReference type="NCBIfam" id="NF008955">
    <property type="entry name" value="PRK12297.1"/>
    <property type="match status" value="1"/>
</dbReference>
<dbReference type="NCBIfam" id="NF008956">
    <property type="entry name" value="PRK12299.1"/>
    <property type="match status" value="1"/>
</dbReference>
<dbReference type="PANTHER" id="PTHR11702">
    <property type="entry name" value="DEVELOPMENTALLY REGULATED GTP-BINDING PROTEIN-RELATED"/>
    <property type="match status" value="1"/>
</dbReference>
<dbReference type="PANTHER" id="PTHR11702:SF31">
    <property type="entry name" value="MITOCHONDRIAL RIBOSOME-ASSOCIATED GTPASE 2"/>
    <property type="match status" value="1"/>
</dbReference>
<dbReference type="Pfam" id="PF01018">
    <property type="entry name" value="GTP1_OBG"/>
    <property type="match status" value="1"/>
</dbReference>
<dbReference type="Pfam" id="PF01926">
    <property type="entry name" value="MMR_HSR1"/>
    <property type="match status" value="1"/>
</dbReference>
<dbReference type="PIRSF" id="PIRSF002401">
    <property type="entry name" value="GTP_bd_Obg/CgtA"/>
    <property type="match status" value="1"/>
</dbReference>
<dbReference type="PRINTS" id="PR00326">
    <property type="entry name" value="GTP1OBG"/>
</dbReference>
<dbReference type="SUPFAM" id="SSF82051">
    <property type="entry name" value="Obg GTP-binding protein N-terminal domain"/>
    <property type="match status" value="1"/>
</dbReference>
<dbReference type="SUPFAM" id="SSF52540">
    <property type="entry name" value="P-loop containing nucleoside triphosphate hydrolases"/>
    <property type="match status" value="1"/>
</dbReference>
<dbReference type="PROSITE" id="PS51710">
    <property type="entry name" value="G_OBG"/>
    <property type="match status" value="1"/>
</dbReference>
<dbReference type="PROSITE" id="PS00905">
    <property type="entry name" value="GTP1_OBG"/>
    <property type="match status" value="1"/>
</dbReference>
<dbReference type="PROSITE" id="PS51883">
    <property type="entry name" value="OBG"/>
    <property type="match status" value="1"/>
</dbReference>
<reference key="1">
    <citation type="submission" date="2007-11" db="EMBL/GenBank/DDBJ databases">
        <title>Complete sequence of Delftia acidovorans DSM 14801 / SPH-1.</title>
        <authorList>
            <person name="Copeland A."/>
            <person name="Lucas S."/>
            <person name="Lapidus A."/>
            <person name="Barry K."/>
            <person name="Glavina del Rio T."/>
            <person name="Dalin E."/>
            <person name="Tice H."/>
            <person name="Pitluck S."/>
            <person name="Lowry S."/>
            <person name="Clum A."/>
            <person name="Schmutz J."/>
            <person name="Larimer F."/>
            <person name="Land M."/>
            <person name="Hauser L."/>
            <person name="Kyrpides N."/>
            <person name="Kim E."/>
            <person name="Schleheck D."/>
            <person name="Richardson P."/>
        </authorList>
    </citation>
    <scope>NUCLEOTIDE SEQUENCE [LARGE SCALE GENOMIC DNA]</scope>
    <source>
        <strain>DSM 14801 / SPH-1</strain>
    </source>
</reference>
<comment type="function">
    <text evidence="1">An essential GTPase which binds GTP, GDP and possibly (p)ppGpp with moderate affinity, with high nucleotide exchange rates and a fairly low GTP hydrolysis rate. Plays a role in control of the cell cycle, stress response, ribosome biogenesis and in those bacteria that undergo differentiation, in morphogenesis control.</text>
</comment>
<comment type="cofactor">
    <cofactor evidence="1">
        <name>Mg(2+)</name>
        <dbReference type="ChEBI" id="CHEBI:18420"/>
    </cofactor>
</comment>
<comment type="subunit">
    <text evidence="1">Monomer.</text>
</comment>
<comment type="subcellular location">
    <subcellularLocation>
        <location evidence="1">Cytoplasm</location>
    </subcellularLocation>
</comment>
<comment type="similarity">
    <text evidence="1">Belongs to the TRAFAC class OBG-HflX-like GTPase superfamily. OBG GTPase family.</text>
</comment>
<name>OBG_DELAS</name>
<organism>
    <name type="scientific">Delftia acidovorans (strain DSM 14801 / SPH-1)</name>
    <dbReference type="NCBI Taxonomy" id="398578"/>
    <lineage>
        <taxon>Bacteria</taxon>
        <taxon>Pseudomonadati</taxon>
        <taxon>Pseudomonadota</taxon>
        <taxon>Betaproteobacteria</taxon>
        <taxon>Burkholderiales</taxon>
        <taxon>Comamonadaceae</taxon>
        <taxon>Delftia</taxon>
    </lineage>
</organism>
<sequence>MKFVDEAYIDISAGDGGNGCVSFRHEKYKEFGGPDGGDGGRGGHVYAVADVNLNTLVDYRFSRRHDATRGEHGKGSDMFGAAGNDITLRMPVGTIISDAETGEVLYELLTAGEVVTIAKGGDGGYGNLRFKSAINRAPRQKTPGWPGERKNLKLELKVLADVGLLGMPNAGKSTFIAAVSNARPKIADYPFTTLHPNLGVVRVAAEQSFVVADIPGLIEGASEGAGLGHQFLRHLQRTRLLLHVVDLAPFDDSVDPVAQAKAIVGELQKYDAELYNKPRWLVLNKLDMVPAEERAARVKDFVKRFKWKGPVFEISALTREGCEVLIRTIYKHVHEQQQIEAGPKEIDPRFVEVEGDGVDLTDPRFAPRDSE</sequence>
<gene>
    <name evidence="1" type="primary">obg</name>
    <name type="ordered locus">Daci_5484</name>
</gene>
<keyword id="KW-0963">Cytoplasm</keyword>
<keyword id="KW-0342">GTP-binding</keyword>
<keyword id="KW-0378">Hydrolase</keyword>
<keyword id="KW-0460">Magnesium</keyword>
<keyword id="KW-0479">Metal-binding</keyword>
<keyword id="KW-0547">Nucleotide-binding</keyword>
<keyword id="KW-1185">Reference proteome</keyword>
<protein>
    <recommendedName>
        <fullName evidence="1">GTPase Obg</fullName>
        <ecNumber evidence="1">3.6.5.-</ecNumber>
    </recommendedName>
    <alternativeName>
        <fullName evidence="1">GTP-binding protein Obg</fullName>
    </alternativeName>
</protein>
<accession>A9BP68</accession>
<feature type="chain" id="PRO_0000385880" description="GTPase Obg">
    <location>
        <begin position="1"/>
        <end position="371"/>
    </location>
</feature>
<feature type="domain" description="Obg" evidence="2">
    <location>
        <begin position="1"/>
        <end position="159"/>
    </location>
</feature>
<feature type="domain" description="OBG-type G" evidence="1">
    <location>
        <begin position="160"/>
        <end position="334"/>
    </location>
</feature>
<feature type="binding site" evidence="1">
    <location>
        <begin position="166"/>
        <end position="173"/>
    </location>
    <ligand>
        <name>GTP</name>
        <dbReference type="ChEBI" id="CHEBI:37565"/>
    </ligand>
</feature>
<feature type="binding site" evidence="1">
    <location>
        <position position="173"/>
    </location>
    <ligand>
        <name>Mg(2+)</name>
        <dbReference type="ChEBI" id="CHEBI:18420"/>
    </ligand>
</feature>
<feature type="binding site" evidence="1">
    <location>
        <begin position="191"/>
        <end position="195"/>
    </location>
    <ligand>
        <name>GTP</name>
        <dbReference type="ChEBI" id="CHEBI:37565"/>
    </ligand>
</feature>
<feature type="binding site" evidence="1">
    <location>
        <position position="193"/>
    </location>
    <ligand>
        <name>Mg(2+)</name>
        <dbReference type="ChEBI" id="CHEBI:18420"/>
    </ligand>
</feature>
<feature type="binding site" evidence="1">
    <location>
        <begin position="213"/>
        <end position="216"/>
    </location>
    <ligand>
        <name>GTP</name>
        <dbReference type="ChEBI" id="CHEBI:37565"/>
    </ligand>
</feature>
<feature type="binding site" evidence="1">
    <location>
        <begin position="284"/>
        <end position="287"/>
    </location>
    <ligand>
        <name>GTP</name>
        <dbReference type="ChEBI" id="CHEBI:37565"/>
    </ligand>
</feature>
<feature type="binding site" evidence="1">
    <location>
        <begin position="315"/>
        <end position="317"/>
    </location>
    <ligand>
        <name>GTP</name>
        <dbReference type="ChEBI" id="CHEBI:37565"/>
    </ligand>
</feature>